<gene>
    <name evidence="1" type="primary">hprK</name>
    <name type="ordered locus">BT9727_4841</name>
</gene>
<name>HPRK_BACHK</name>
<proteinExistence type="inferred from homology"/>
<protein>
    <recommendedName>
        <fullName evidence="1">HPr kinase/phosphorylase</fullName>
        <shortName evidence="1">HPrK/P</shortName>
        <ecNumber evidence="1">2.7.11.-</ecNumber>
        <ecNumber evidence="1">2.7.4.-</ecNumber>
    </recommendedName>
    <alternativeName>
        <fullName evidence="1">HPr(Ser) kinase/phosphorylase</fullName>
    </alternativeName>
</protein>
<evidence type="ECO:0000255" key="1">
    <source>
        <dbReference type="HAMAP-Rule" id="MF_01249"/>
    </source>
</evidence>
<dbReference type="EC" id="2.7.11.-" evidence="1"/>
<dbReference type="EC" id="2.7.4.-" evidence="1"/>
<dbReference type="EMBL" id="AE017355">
    <property type="protein sequence ID" value="AAT63337.1"/>
    <property type="molecule type" value="Genomic_DNA"/>
</dbReference>
<dbReference type="RefSeq" id="WP_001127244.1">
    <property type="nucleotide sequence ID" value="NC_005957.1"/>
</dbReference>
<dbReference type="RefSeq" id="YP_039150.1">
    <property type="nucleotide sequence ID" value="NC_005957.1"/>
</dbReference>
<dbReference type="SMR" id="Q6HBC6"/>
<dbReference type="GeneID" id="45024995"/>
<dbReference type="KEGG" id="btk:BT9727_4841"/>
<dbReference type="PATRIC" id="fig|281309.8.peg.5147"/>
<dbReference type="HOGENOM" id="CLU_052030_0_1_9"/>
<dbReference type="Proteomes" id="UP000001301">
    <property type="component" value="Chromosome"/>
</dbReference>
<dbReference type="GO" id="GO:0005524">
    <property type="term" value="F:ATP binding"/>
    <property type="evidence" value="ECO:0007669"/>
    <property type="project" value="UniProtKB-UniRule"/>
</dbReference>
<dbReference type="GO" id="GO:0000287">
    <property type="term" value="F:magnesium ion binding"/>
    <property type="evidence" value="ECO:0007669"/>
    <property type="project" value="UniProtKB-UniRule"/>
</dbReference>
<dbReference type="GO" id="GO:0000155">
    <property type="term" value="F:phosphorelay sensor kinase activity"/>
    <property type="evidence" value="ECO:0007669"/>
    <property type="project" value="InterPro"/>
</dbReference>
<dbReference type="GO" id="GO:0004674">
    <property type="term" value="F:protein serine/threonine kinase activity"/>
    <property type="evidence" value="ECO:0007669"/>
    <property type="project" value="UniProtKB-KW"/>
</dbReference>
<dbReference type="GO" id="GO:0004712">
    <property type="term" value="F:protein serine/threonine/tyrosine kinase activity"/>
    <property type="evidence" value="ECO:0007669"/>
    <property type="project" value="UniProtKB-UniRule"/>
</dbReference>
<dbReference type="GO" id="GO:0006109">
    <property type="term" value="P:regulation of carbohydrate metabolic process"/>
    <property type="evidence" value="ECO:0007669"/>
    <property type="project" value="UniProtKB-UniRule"/>
</dbReference>
<dbReference type="CDD" id="cd01918">
    <property type="entry name" value="HprK_C"/>
    <property type="match status" value="1"/>
</dbReference>
<dbReference type="FunFam" id="3.40.1390.20:FF:000002">
    <property type="entry name" value="HPr kinase/phosphorylase"/>
    <property type="match status" value="1"/>
</dbReference>
<dbReference type="FunFam" id="3.40.50.300:FF:000174">
    <property type="entry name" value="HPr kinase/phosphorylase"/>
    <property type="match status" value="1"/>
</dbReference>
<dbReference type="Gene3D" id="3.40.1390.20">
    <property type="entry name" value="HprK N-terminal domain-like"/>
    <property type="match status" value="1"/>
</dbReference>
<dbReference type="Gene3D" id="3.40.50.300">
    <property type="entry name" value="P-loop containing nucleotide triphosphate hydrolases"/>
    <property type="match status" value="1"/>
</dbReference>
<dbReference type="HAMAP" id="MF_01249">
    <property type="entry name" value="HPr_kinase"/>
    <property type="match status" value="1"/>
</dbReference>
<dbReference type="InterPro" id="IPR003755">
    <property type="entry name" value="HPr(Ser)_kin/Pase"/>
</dbReference>
<dbReference type="InterPro" id="IPR011104">
    <property type="entry name" value="Hpr_kin/Pase_C"/>
</dbReference>
<dbReference type="InterPro" id="IPR011126">
    <property type="entry name" value="Hpr_kin/Pase_Hpr_N"/>
</dbReference>
<dbReference type="InterPro" id="IPR027417">
    <property type="entry name" value="P-loop_NTPase"/>
</dbReference>
<dbReference type="InterPro" id="IPR028979">
    <property type="entry name" value="Ser_kin/Pase_Hpr-like_N_sf"/>
</dbReference>
<dbReference type="NCBIfam" id="TIGR00679">
    <property type="entry name" value="hpr-ser"/>
    <property type="match status" value="1"/>
</dbReference>
<dbReference type="PANTHER" id="PTHR30305:SF1">
    <property type="entry name" value="HPR KINASE_PHOSPHORYLASE"/>
    <property type="match status" value="1"/>
</dbReference>
<dbReference type="PANTHER" id="PTHR30305">
    <property type="entry name" value="PROTEIN YJDM-RELATED"/>
    <property type="match status" value="1"/>
</dbReference>
<dbReference type="Pfam" id="PF07475">
    <property type="entry name" value="Hpr_kinase_C"/>
    <property type="match status" value="1"/>
</dbReference>
<dbReference type="Pfam" id="PF02603">
    <property type="entry name" value="Hpr_kinase_N"/>
    <property type="match status" value="1"/>
</dbReference>
<dbReference type="SUPFAM" id="SSF75138">
    <property type="entry name" value="HprK N-terminal domain-like"/>
    <property type="match status" value="1"/>
</dbReference>
<dbReference type="SUPFAM" id="SSF53795">
    <property type="entry name" value="PEP carboxykinase-like"/>
    <property type="match status" value="1"/>
</dbReference>
<accession>Q6HBC6</accession>
<sequence length="309" mass="34587">MPKVRTKDLIEQFQLELISGEEGIHRPIDTSDLSRPGIEMAGFFTYYPADRVQLLGKTELTFFDTLTSDQKQERMKALCTEETPCIIVTRNQDVPDELLQASRESGMPLLRSSQTTTRLSSRLTNYLEGKLAPTTAVHGVLVDIYGVGVLITGQSGVGKSETALELVKRGHRLVADDSVEIRQEDEDMLVGSSPDLIEHLLEIRGLGIINVMTLFGAGAVRNYKRITLVINLEIWDQKKNYDRLGLDEEKMKIIDTELTKITLPVRPGRNLAVIIEVAAMNFRLKRMGVNAAQQFSERLMSAIELGNQE</sequence>
<organism>
    <name type="scientific">Bacillus thuringiensis subsp. konkukian (strain 97-27)</name>
    <dbReference type="NCBI Taxonomy" id="281309"/>
    <lineage>
        <taxon>Bacteria</taxon>
        <taxon>Bacillati</taxon>
        <taxon>Bacillota</taxon>
        <taxon>Bacilli</taxon>
        <taxon>Bacillales</taxon>
        <taxon>Bacillaceae</taxon>
        <taxon>Bacillus</taxon>
        <taxon>Bacillus cereus group</taxon>
    </lineage>
</organism>
<feature type="chain" id="PRO_1000067122" description="HPr kinase/phosphorylase">
    <location>
        <begin position="1"/>
        <end position="309"/>
    </location>
</feature>
<feature type="region of interest" description="Important for the catalytic mechanism of both phosphorylation and dephosphorylation" evidence="1">
    <location>
        <begin position="201"/>
        <end position="210"/>
    </location>
</feature>
<feature type="region of interest" description="Important for the catalytic mechanism of dephosphorylation" evidence="1">
    <location>
        <begin position="264"/>
        <end position="269"/>
    </location>
</feature>
<feature type="active site" evidence="1">
    <location>
        <position position="138"/>
    </location>
</feature>
<feature type="active site" evidence="1">
    <location>
        <position position="159"/>
    </location>
</feature>
<feature type="active site" description="Proton acceptor; for phosphorylation activity. Proton donor; for dephosphorylation activity" evidence="1">
    <location>
        <position position="177"/>
    </location>
</feature>
<feature type="active site" evidence="1">
    <location>
        <position position="243"/>
    </location>
</feature>
<feature type="binding site" evidence="1">
    <location>
        <begin position="153"/>
        <end position="160"/>
    </location>
    <ligand>
        <name>ATP</name>
        <dbReference type="ChEBI" id="CHEBI:30616"/>
    </ligand>
</feature>
<feature type="binding site" evidence="1">
    <location>
        <position position="160"/>
    </location>
    <ligand>
        <name>Mg(2+)</name>
        <dbReference type="ChEBI" id="CHEBI:18420"/>
    </ligand>
</feature>
<feature type="binding site" evidence="1">
    <location>
        <position position="202"/>
    </location>
    <ligand>
        <name>Mg(2+)</name>
        <dbReference type="ChEBI" id="CHEBI:18420"/>
    </ligand>
</feature>
<comment type="function">
    <text evidence="1">Catalyzes the ATP- as well as the pyrophosphate-dependent phosphorylation of a specific serine residue in HPr, a phosphocarrier protein of the phosphoenolpyruvate-dependent sugar phosphotransferase system (PTS). HprK/P also catalyzes the pyrophosphate-producing, inorganic phosphate-dependent dephosphorylation (phosphorolysis) of seryl-phosphorylated HPr (P-Ser-HPr). The two antagonistic activities of HprK/P are regulated by several intracellular metabolites, which change their concentration in response to the absence or presence of rapidly metabolisable carbon sources (glucose, fructose, etc.) in the growth medium. Also phosphorylates/dephosphorylates the HPr-like catabolite repression protein crh on a specific serine residue. Therefore, by controlling the phosphorylation state of HPr and crh, HPrK/P is a sensor enzyme that plays a major role in the regulation of carbon metabolism and sugar transport: it mediates carbon catabolite repression (CCR), and regulates PTS-catalyzed carbohydrate uptake and inducer exclusion.</text>
</comment>
<comment type="catalytic activity">
    <reaction evidence="1">
        <text>[HPr protein]-L-serine + ATP = [HPr protein]-O-phospho-L-serine + ADP + H(+)</text>
        <dbReference type="Rhea" id="RHEA:46600"/>
        <dbReference type="Rhea" id="RHEA-COMP:11602"/>
        <dbReference type="Rhea" id="RHEA-COMP:11603"/>
        <dbReference type="ChEBI" id="CHEBI:15378"/>
        <dbReference type="ChEBI" id="CHEBI:29999"/>
        <dbReference type="ChEBI" id="CHEBI:30616"/>
        <dbReference type="ChEBI" id="CHEBI:83421"/>
        <dbReference type="ChEBI" id="CHEBI:456216"/>
    </reaction>
</comment>
<comment type="catalytic activity">
    <reaction evidence="1">
        <text>[HPr protein]-O-phospho-L-serine + phosphate + H(+) = [HPr protein]-L-serine + diphosphate</text>
        <dbReference type="Rhea" id="RHEA:46604"/>
        <dbReference type="Rhea" id="RHEA-COMP:11602"/>
        <dbReference type="Rhea" id="RHEA-COMP:11603"/>
        <dbReference type="ChEBI" id="CHEBI:15378"/>
        <dbReference type="ChEBI" id="CHEBI:29999"/>
        <dbReference type="ChEBI" id="CHEBI:33019"/>
        <dbReference type="ChEBI" id="CHEBI:43474"/>
        <dbReference type="ChEBI" id="CHEBI:83421"/>
    </reaction>
</comment>
<comment type="cofactor">
    <cofactor evidence="1">
        <name>Mg(2+)</name>
        <dbReference type="ChEBI" id="CHEBI:18420"/>
    </cofactor>
</comment>
<comment type="subunit">
    <text evidence="1">Homohexamer.</text>
</comment>
<comment type="domain">
    <text evidence="1">The Walker A ATP-binding motif also binds Pi and PPi.</text>
</comment>
<comment type="miscellaneous">
    <text evidence="1">Both phosphorylation and phosphorolysis are carried out by the same active site and suggest a common mechanism for both reactions.</text>
</comment>
<comment type="similarity">
    <text evidence="1">Belongs to the HPrK/P family.</text>
</comment>
<reference key="1">
    <citation type="journal article" date="2006" name="J. Bacteriol.">
        <title>Pathogenomic sequence analysis of Bacillus cereus and Bacillus thuringiensis isolates closely related to Bacillus anthracis.</title>
        <authorList>
            <person name="Han C.S."/>
            <person name="Xie G."/>
            <person name="Challacombe J.F."/>
            <person name="Altherr M.R."/>
            <person name="Bhotika S.S."/>
            <person name="Bruce D."/>
            <person name="Campbell C.S."/>
            <person name="Campbell M.L."/>
            <person name="Chen J."/>
            <person name="Chertkov O."/>
            <person name="Cleland C."/>
            <person name="Dimitrijevic M."/>
            <person name="Doggett N.A."/>
            <person name="Fawcett J.J."/>
            <person name="Glavina T."/>
            <person name="Goodwin L.A."/>
            <person name="Hill K.K."/>
            <person name="Hitchcock P."/>
            <person name="Jackson P.J."/>
            <person name="Keim P."/>
            <person name="Kewalramani A.R."/>
            <person name="Longmire J."/>
            <person name="Lucas S."/>
            <person name="Malfatti S."/>
            <person name="McMurry K."/>
            <person name="Meincke L.J."/>
            <person name="Misra M."/>
            <person name="Moseman B.L."/>
            <person name="Mundt M."/>
            <person name="Munk A.C."/>
            <person name="Okinaka R.T."/>
            <person name="Parson-Quintana B."/>
            <person name="Reilly L.P."/>
            <person name="Richardson P."/>
            <person name="Robinson D.L."/>
            <person name="Rubin E."/>
            <person name="Saunders E."/>
            <person name="Tapia R."/>
            <person name="Tesmer J.G."/>
            <person name="Thayer N."/>
            <person name="Thompson L.S."/>
            <person name="Tice H."/>
            <person name="Ticknor L.O."/>
            <person name="Wills P.L."/>
            <person name="Brettin T.S."/>
            <person name="Gilna P."/>
        </authorList>
    </citation>
    <scope>NUCLEOTIDE SEQUENCE [LARGE SCALE GENOMIC DNA]</scope>
    <source>
        <strain>97-27</strain>
    </source>
</reference>
<keyword id="KW-0067">ATP-binding</keyword>
<keyword id="KW-0119">Carbohydrate metabolism</keyword>
<keyword id="KW-0418">Kinase</keyword>
<keyword id="KW-0460">Magnesium</keyword>
<keyword id="KW-0479">Metal-binding</keyword>
<keyword id="KW-0511">Multifunctional enzyme</keyword>
<keyword id="KW-0547">Nucleotide-binding</keyword>
<keyword id="KW-0723">Serine/threonine-protein kinase</keyword>
<keyword id="KW-0808">Transferase</keyword>